<name>CRIT_STRCO</name>
<reference key="1">
    <citation type="journal article" date="2002" name="Nature">
        <title>Complete genome sequence of the model actinomycete Streptomyces coelicolor A3(2).</title>
        <authorList>
            <person name="Bentley S.D."/>
            <person name="Chater K.F."/>
            <person name="Cerdeno-Tarraga A.-M."/>
            <person name="Challis G.L."/>
            <person name="Thomson N.R."/>
            <person name="James K.D."/>
            <person name="Harris D.E."/>
            <person name="Quail M.A."/>
            <person name="Kieser H."/>
            <person name="Harper D."/>
            <person name="Bateman A."/>
            <person name="Brown S."/>
            <person name="Chandra G."/>
            <person name="Chen C.W."/>
            <person name="Collins M."/>
            <person name="Cronin A."/>
            <person name="Fraser A."/>
            <person name="Goble A."/>
            <person name="Hidalgo J."/>
            <person name="Hornsby T."/>
            <person name="Howarth S."/>
            <person name="Huang C.-H."/>
            <person name="Kieser T."/>
            <person name="Larke L."/>
            <person name="Murphy L.D."/>
            <person name="Oliver K."/>
            <person name="O'Neil S."/>
            <person name="Rabbinowitsch E."/>
            <person name="Rajandream M.A."/>
            <person name="Rutherford K.M."/>
            <person name="Rutter S."/>
            <person name="Seeger K."/>
            <person name="Saunders D."/>
            <person name="Sharp S."/>
            <person name="Squares R."/>
            <person name="Squares S."/>
            <person name="Taylor K."/>
            <person name="Warren T."/>
            <person name="Wietzorrek A."/>
            <person name="Woodward J.R."/>
            <person name="Barrell B.G."/>
            <person name="Parkhill J."/>
            <person name="Hopwood D.A."/>
        </authorList>
    </citation>
    <scope>NUCLEOTIDE SEQUENCE [LARGE SCALE GENOMIC DNA]</scope>
    <source>
        <strain>ATCC BAA-471 / A3(2) / M145</strain>
    </source>
</reference>
<gene>
    <name type="primary">crtB/uppS3</name>
    <name type="ordered locus">SCP1.212</name>
</gene>
<accession>Q9ACU1</accession>
<protein>
    <recommendedName>
        <fullName>Bifunctional protein CrtB/UppS</fullName>
    </recommendedName>
    <domain>
        <recommendedName>
            <fullName>Phytoene synthase</fullName>
            <ecNumber>2.5.1.32</ecNumber>
        </recommendedName>
    </domain>
    <domain>
        <recommendedName>
            <fullName>Isoprenyl transferase</fullName>
            <ecNumber>2.5.1.-</ecNumber>
        </recommendedName>
    </domain>
</protein>
<dbReference type="EC" id="2.5.1.32"/>
<dbReference type="EC" id="2.5.1.-"/>
<dbReference type="EMBL" id="AL589148">
    <property type="protein sequence ID" value="CAC36733.1"/>
    <property type="molecule type" value="Genomic_DNA"/>
</dbReference>
<dbReference type="RefSeq" id="NP_639818.1">
    <property type="nucleotide sequence ID" value="NC_003903.1"/>
</dbReference>
<dbReference type="SMR" id="Q9ACU1"/>
<dbReference type="STRING" id="100226.gene:17765717"/>
<dbReference type="KEGG" id="sco:SCP1.212"/>
<dbReference type="PATRIC" id="fig|100226.15.peg.8152"/>
<dbReference type="HOGENOM" id="CLU_035230_0_0_11"/>
<dbReference type="InParanoid" id="Q9ACU1"/>
<dbReference type="OrthoDB" id="3423078at2"/>
<dbReference type="UniPathway" id="UPA00799">
    <property type="reaction ID" value="UER00773"/>
</dbReference>
<dbReference type="Proteomes" id="UP000001973">
    <property type="component" value="Plasmid SCP1"/>
</dbReference>
<dbReference type="GO" id="GO:0005829">
    <property type="term" value="C:cytosol"/>
    <property type="evidence" value="ECO:0000318"/>
    <property type="project" value="GO_Central"/>
</dbReference>
<dbReference type="GO" id="GO:0005886">
    <property type="term" value="C:plasma membrane"/>
    <property type="evidence" value="ECO:0000318"/>
    <property type="project" value="GO_Central"/>
</dbReference>
<dbReference type="GO" id="GO:0008834">
    <property type="term" value="F:ditrans,polycis-undecaprenyl-diphosphate synthase [(2E,6E)-farnesyl-diphosphate specific] activity"/>
    <property type="evidence" value="ECO:0000318"/>
    <property type="project" value="GO_Central"/>
</dbReference>
<dbReference type="GO" id="GO:0000287">
    <property type="term" value="F:magnesium ion binding"/>
    <property type="evidence" value="ECO:0000318"/>
    <property type="project" value="GO_Central"/>
</dbReference>
<dbReference type="GO" id="GO:0030145">
    <property type="term" value="F:manganese ion binding"/>
    <property type="evidence" value="ECO:0000318"/>
    <property type="project" value="GO_Central"/>
</dbReference>
<dbReference type="GO" id="GO:0033850">
    <property type="term" value="F:Z-farnesyl diphosphate synthase activity"/>
    <property type="evidence" value="ECO:0000318"/>
    <property type="project" value="GO_Central"/>
</dbReference>
<dbReference type="GO" id="GO:0016117">
    <property type="term" value="P:carotenoid biosynthetic process"/>
    <property type="evidence" value="ECO:0007669"/>
    <property type="project" value="UniProtKB-KW"/>
</dbReference>
<dbReference type="GO" id="GO:0051301">
    <property type="term" value="P:cell division"/>
    <property type="evidence" value="ECO:0007669"/>
    <property type="project" value="UniProtKB-KW"/>
</dbReference>
<dbReference type="GO" id="GO:0071555">
    <property type="term" value="P:cell wall organization"/>
    <property type="evidence" value="ECO:0007669"/>
    <property type="project" value="UniProtKB-KW"/>
</dbReference>
<dbReference type="GO" id="GO:0009252">
    <property type="term" value="P:peptidoglycan biosynthetic process"/>
    <property type="evidence" value="ECO:0007669"/>
    <property type="project" value="UniProtKB-KW"/>
</dbReference>
<dbReference type="GO" id="GO:0016094">
    <property type="term" value="P:polyprenol biosynthetic process"/>
    <property type="evidence" value="ECO:0000318"/>
    <property type="project" value="GO_Central"/>
</dbReference>
<dbReference type="GO" id="GO:0008360">
    <property type="term" value="P:regulation of cell shape"/>
    <property type="evidence" value="ECO:0007669"/>
    <property type="project" value="UniProtKB-KW"/>
</dbReference>
<dbReference type="CDD" id="cd00475">
    <property type="entry name" value="Cis_IPPS"/>
    <property type="match status" value="1"/>
</dbReference>
<dbReference type="Gene3D" id="3.40.1180.10">
    <property type="entry name" value="Decaprenyl diphosphate synthase-like"/>
    <property type="match status" value="1"/>
</dbReference>
<dbReference type="Gene3D" id="1.10.600.10">
    <property type="entry name" value="Farnesyl Diphosphate Synthase"/>
    <property type="match status" value="1"/>
</dbReference>
<dbReference type="HAMAP" id="MF_01139">
    <property type="entry name" value="ISPT"/>
    <property type="match status" value="1"/>
</dbReference>
<dbReference type="InterPro" id="IPR008949">
    <property type="entry name" value="Isoprenoid_synthase_dom_sf"/>
</dbReference>
<dbReference type="InterPro" id="IPR002060">
    <property type="entry name" value="Squ/phyt_synthse"/>
</dbReference>
<dbReference type="InterPro" id="IPR019845">
    <property type="entry name" value="Squalene/phytoene_synthase_CS"/>
</dbReference>
<dbReference type="InterPro" id="IPR001441">
    <property type="entry name" value="UPP_synth-like"/>
</dbReference>
<dbReference type="InterPro" id="IPR018520">
    <property type="entry name" value="UPP_synth-like_CS"/>
</dbReference>
<dbReference type="InterPro" id="IPR036424">
    <property type="entry name" value="UPP_synth-like_sf"/>
</dbReference>
<dbReference type="NCBIfam" id="TIGR00055">
    <property type="entry name" value="uppS"/>
    <property type="match status" value="1"/>
</dbReference>
<dbReference type="PANTHER" id="PTHR10291:SF0">
    <property type="entry name" value="DEHYDRODOLICHYL DIPHOSPHATE SYNTHASE 2"/>
    <property type="match status" value="1"/>
</dbReference>
<dbReference type="PANTHER" id="PTHR10291">
    <property type="entry name" value="DEHYDRODOLICHYL DIPHOSPHATE SYNTHASE FAMILY MEMBER"/>
    <property type="match status" value="1"/>
</dbReference>
<dbReference type="Pfam" id="PF01255">
    <property type="entry name" value="Prenyltransf"/>
    <property type="match status" value="1"/>
</dbReference>
<dbReference type="Pfam" id="PF00494">
    <property type="entry name" value="SQS_PSY"/>
    <property type="match status" value="1"/>
</dbReference>
<dbReference type="SUPFAM" id="SSF48576">
    <property type="entry name" value="Terpenoid synthases"/>
    <property type="match status" value="1"/>
</dbReference>
<dbReference type="SUPFAM" id="SSF64005">
    <property type="entry name" value="Undecaprenyl diphosphate synthase"/>
    <property type="match status" value="1"/>
</dbReference>
<dbReference type="PROSITE" id="PS01045">
    <property type="entry name" value="SQUALEN_PHYTOEN_SYN_2"/>
    <property type="match status" value="1"/>
</dbReference>
<dbReference type="PROSITE" id="PS01066">
    <property type="entry name" value="UPP_SYNTHASE"/>
    <property type="match status" value="1"/>
</dbReference>
<keyword id="KW-0125">Carotenoid biosynthesis</keyword>
<keyword id="KW-0131">Cell cycle</keyword>
<keyword id="KW-0132">Cell division</keyword>
<keyword id="KW-0133">Cell shape</keyword>
<keyword id="KW-0961">Cell wall biogenesis/degradation</keyword>
<keyword id="KW-0460">Magnesium</keyword>
<keyword id="KW-0479">Metal-binding</keyword>
<keyword id="KW-0511">Multifunctional enzyme</keyword>
<keyword id="KW-0573">Peptidoglycan synthesis</keyword>
<keyword id="KW-0614">Plasmid</keyword>
<keyword id="KW-1185">Reference proteome</keyword>
<keyword id="KW-0808">Transferase</keyword>
<organism>
    <name type="scientific">Streptomyces coelicolor (strain ATCC BAA-471 / A3(2) / M145)</name>
    <dbReference type="NCBI Taxonomy" id="100226"/>
    <lineage>
        <taxon>Bacteria</taxon>
        <taxon>Bacillati</taxon>
        <taxon>Actinomycetota</taxon>
        <taxon>Actinomycetes</taxon>
        <taxon>Kitasatosporales</taxon>
        <taxon>Streptomycetaceae</taxon>
        <taxon>Streptomyces</taxon>
        <taxon>Streptomyces albidoflavus group</taxon>
    </lineage>
</organism>
<feature type="chain" id="PRO_0000123687" description="Bifunctional protein CrtB/UppS">
    <location>
        <begin position="1"/>
        <end position="564"/>
    </location>
</feature>
<feature type="active site" evidence="1">
    <location>
        <position position="329"/>
    </location>
</feature>
<feature type="active site" description="Proton acceptor" evidence="1">
    <location>
        <position position="377"/>
    </location>
</feature>
<feature type="binding site" evidence="1">
    <location>
        <position position="329"/>
    </location>
    <ligand>
        <name>Mg(2+)</name>
        <dbReference type="ChEBI" id="CHEBI:18420"/>
    </ligand>
</feature>
<feature type="binding site" evidence="1">
    <location>
        <begin position="330"/>
        <end position="333"/>
    </location>
    <ligand>
        <name>substrate</name>
    </ligand>
</feature>
<feature type="binding site" evidence="1">
    <location>
        <position position="334"/>
    </location>
    <ligand>
        <name>substrate</name>
    </ligand>
</feature>
<feature type="binding site" evidence="1">
    <location>
        <position position="346"/>
    </location>
    <ligand>
        <name>substrate</name>
    </ligand>
</feature>
<feature type="binding site" evidence="1">
    <location>
        <begin position="374"/>
        <end position="376"/>
    </location>
    <ligand>
        <name>substrate</name>
    </ligand>
</feature>
<feature type="binding site" evidence="1">
    <location>
        <position position="378"/>
    </location>
    <ligand>
        <name>substrate</name>
    </ligand>
</feature>
<feature type="binding site" evidence="1">
    <location>
        <position position="380"/>
    </location>
    <ligand>
        <name>substrate</name>
    </ligand>
</feature>
<feature type="binding site" evidence="1">
    <location>
        <position position="497"/>
    </location>
    <ligand>
        <name>substrate</name>
    </ligand>
</feature>
<feature type="binding site" evidence="1">
    <location>
        <begin position="502"/>
        <end position="504"/>
    </location>
    <ligand>
        <name>substrate</name>
    </ligand>
</feature>
<feature type="binding site" evidence="1">
    <location>
        <position position="515"/>
    </location>
    <ligand>
        <name>Mg(2+)</name>
        <dbReference type="ChEBI" id="CHEBI:18420"/>
    </ligand>
</feature>
<comment type="function">
    <text evidence="1">Catalyzes the reaction from prephytoene diphosphate to phytoene.</text>
</comment>
<comment type="function">
    <text evidence="1">Catalyzes the condensation of isopentenyl diphosphate (IPP) with allylic pyrophosphates generating different type of terpenoids.</text>
</comment>
<comment type="catalytic activity">
    <reaction>
        <text>2 (2E,6E,10E)-geranylgeranyl diphosphate = 15-cis-phytoene + 2 diphosphate</text>
        <dbReference type="Rhea" id="RHEA:34475"/>
        <dbReference type="ChEBI" id="CHEBI:27787"/>
        <dbReference type="ChEBI" id="CHEBI:33019"/>
        <dbReference type="ChEBI" id="CHEBI:58756"/>
        <dbReference type="EC" id="2.5.1.32"/>
    </reaction>
</comment>
<comment type="cofactor">
    <cofactor evidence="1">
        <name>Mg(2+)</name>
        <dbReference type="ChEBI" id="CHEBI:18420"/>
    </cofactor>
    <text evidence="1">Binds 2 magnesium ions per subunit.</text>
</comment>
<comment type="pathway">
    <text>Carotenoid biosynthesis; phytoene biosynthesis; all-trans-phytoene from geranylgeranyl diphosphate: step 1/1.</text>
</comment>
<comment type="subunit">
    <text evidence="1">Homodimer.</text>
</comment>
<comment type="similarity">
    <text evidence="2">In the N-terminal section; belongs to the phytoene/squalene synthase family.</text>
</comment>
<comment type="similarity">
    <text evidence="2">In the C-terminal section; belongs to the UPP synthase family.</text>
</comment>
<geneLocation type="plasmid">
    <name>SCP1</name>
</geneLocation>
<proteinExistence type="inferred from homology"/>
<evidence type="ECO:0000250" key="1"/>
<evidence type="ECO:0000305" key="2"/>
<sequence length="564" mass="62105">MVRDWSACGSLLLVMTVAKDRGGPAVAGSGGGVESPELRAAYEVCEAEARQFAVELWAAAETLPVETRPSLYAIASWSAYTDRIIDEGPLEGREERLAQWSADTLADLRAGHSSHPLRRALVDTVRRWGLAEALIEEHLDSARADCAAVPVFETFKDQRRYLRGCSGALAELWVPLLEPRGPEAFRLMSVLGEACQVADLFEDLPDDLAAGRCYLPRQDLRGLGLDVDDLRRGEREEALNAFVDAQLAHWRGLLEETVLAPSTVGARYQIFVHTLLLGAQMHFDEVTLLRSRVLTQGLESLVTGDGRMSRRAARPGPGPVPGHIAVIADGNRRWAEARGLLADQGHRAGIRAVLRLVNAAQRTGIRHVTVYMFSTENWYRSQGEVAALFGAFADWFARGAQTVHELGVRVRWSGRRDRLEESLASSFELLESMTANNDKLTLTICLDYGGREELAAAARALAAEAVAGTIRPEQIGMAEVARHLYVPEMPDVDLLVRTCEQRISNFLPWHLAYAELVFDPAPWPDFDLARLRDAVDSYAGRERRFGGDAELPAQAGNLEPARNG</sequence>